<accession>O04886</accession>
<accession>O04888</accession>
<dbReference type="EC" id="3.1.1.11"/>
<dbReference type="EMBL" id="U82973">
    <property type="protein sequence ID" value="AAB57667.1"/>
    <property type="molecule type" value="Genomic_DNA"/>
</dbReference>
<dbReference type="EMBL" id="U82976">
    <property type="protein sequence ID" value="AAB57670.1"/>
    <property type="molecule type" value="mRNA"/>
</dbReference>
<dbReference type="PIR" id="T10485">
    <property type="entry name" value="T10485"/>
</dbReference>
<dbReference type="RefSeq" id="NP_001275859.1">
    <property type="nucleotide sequence ID" value="NM_001288930.1"/>
</dbReference>
<dbReference type="SMR" id="O04886"/>
<dbReference type="GlyCosmos" id="O04886">
    <property type="glycosylation" value="3 sites, No reported glycans"/>
</dbReference>
<dbReference type="GeneID" id="102578056"/>
<dbReference type="KEGG" id="cit:102578056"/>
<dbReference type="OrthoDB" id="255965at71240"/>
<dbReference type="BRENDA" id="3.1.1.11">
    <property type="organism ID" value="1426"/>
</dbReference>
<dbReference type="UniPathway" id="UPA00545">
    <property type="reaction ID" value="UER00823"/>
</dbReference>
<dbReference type="GO" id="GO:0005576">
    <property type="term" value="C:extracellular region"/>
    <property type="evidence" value="ECO:0007669"/>
    <property type="project" value="UniProtKB-KW"/>
</dbReference>
<dbReference type="GO" id="GO:0004857">
    <property type="term" value="F:enzyme inhibitor activity"/>
    <property type="evidence" value="ECO:0007669"/>
    <property type="project" value="InterPro"/>
</dbReference>
<dbReference type="GO" id="GO:0030599">
    <property type="term" value="F:pectinesterase activity"/>
    <property type="evidence" value="ECO:0007669"/>
    <property type="project" value="UniProtKB-EC"/>
</dbReference>
<dbReference type="GO" id="GO:0042545">
    <property type="term" value="P:cell wall modification"/>
    <property type="evidence" value="ECO:0007669"/>
    <property type="project" value="InterPro"/>
</dbReference>
<dbReference type="GO" id="GO:0045490">
    <property type="term" value="P:pectin catabolic process"/>
    <property type="evidence" value="ECO:0007669"/>
    <property type="project" value="UniProtKB-UniPathway"/>
</dbReference>
<dbReference type="CDD" id="cd15798">
    <property type="entry name" value="PMEI-like_3"/>
    <property type="match status" value="1"/>
</dbReference>
<dbReference type="FunFam" id="1.20.140.40:FF:000010">
    <property type="entry name" value="Pectinesterase"/>
    <property type="match status" value="1"/>
</dbReference>
<dbReference type="FunFam" id="2.160.20.10:FF:000001">
    <property type="entry name" value="Pectinesterase"/>
    <property type="match status" value="1"/>
</dbReference>
<dbReference type="Gene3D" id="1.20.140.40">
    <property type="entry name" value="Invertase/pectin methylesterase inhibitor family protein"/>
    <property type="match status" value="1"/>
</dbReference>
<dbReference type="Gene3D" id="2.160.20.10">
    <property type="entry name" value="Single-stranded right-handed beta-helix, Pectin lyase-like"/>
    <property type="match status" value="1"/>
</dbReference>
<dbReference type="InterPro" id="IPR035513">
    <property type="entry name" value="Invertase/methylesterase_inhib"/>
</dbReference>
<dbReference type="InterPro" id="IPR012334">
    <property type="entry name" value="Pectin_lyas_fold"/>
</dbReference>
<dbReference type="InterPro" id="IPR011050">
    <property type="entry name" value="Pectin_lyase_fold/virulence"/>
</dbReference>
<dbReference type="InterPro" id="IPR033131">
    <property type="entry name" value="Pectinesterase_Asp_AS"/>
</dbReference>
<dbReference type="InterPro" id="IPR000070">
    <property type="entry name" value="Pectinesterase_cat"/>
</dbReference>
<dbReference type="InterPro" id="IPR006501">
    <property type="entry name" value="Pectinesterase_inhib_dom"/>
</dbReference>
<dbReference type="InterPro" id="IPR018040">
    <property type="entry name" value="Pectinesterase_Tyr_AS"/>
</dbReference>
<dbReference type="NCBIfam" id="TIGR01614">
    <property type="entry name" value="PME_inhib"/>
    <property type="match status" value="1"/>
</dbReference>
<dbReference type="PANTHER" id="PTHR31707">
    <property type="entry name" value="PECTINESTERASE"/>
    <property type="match status" value="1"/>
</dbReference>
<dbReference type="Pfam" id="PF01095">
    <property type="entry name" value="Pectinesterase"/>
    <property type="match status" value="1"/>
</dbReference>
<dbReference type="Pfam" id="PF04043">
    <property type="entry name" value="PMEI"/>
    <property type="match status" value="1"/>
</dbReference>
<dbReference type="SMART" id="SM00856">
    <property type="entry name" value="PMEI"/>
    <property type="match status" value="1"/>
</dbReference>
<dbReference type="SUPFAM" id="SSF51126">
    <property type="entry name" value="Pectin lyase-like"/>
    <property type="match status" value="1"/>
</dbReference>
<dbReference type="SUPFAM" id="SSF101148">
    <property type="entry name" value="Plant invertase/pectin methylesterase inhibitor"/>
    <property type="match status" value="1"/>
</dbReference>
<dbReference type="PROSITE" id="PS00800">
    <property type="entry name" value="PECTINESTERASE_1"/>
    <property type="match status" value="1"/>
</dbReference>
<dbReference type="PROSITE" id="PS00503">
    <property type="entry name" value="PECTINESTERASE_2"/>
    <property type="match status" value="1"/>
</dbReference>
<name>PME1_CITSI</name>
<keyword id="KW-0063">Aspartyl esterase</keyword>
<keyword id="KW-0134">Cell wall</keyword>
<keyword id="KW-0961">Cell wall biogenesis/degradation</keyword>
<keyword id="KW-1015">Disulfide bond</keyword>
<keyword id="KW-0325">Glycoprotein</keyword>
<keyword id="KW-0378">Hydrolase</keyword>
<keyword id="KW-0964">Secreted</keyword>
<keyword id="KW-0732">Signal</keyword>
<proteinExistence type="evidence at transcript level"/>
<protein>
    <recommendedName>
        <fullName>Pectinesterase 1</fullName>
        <shortName>PE 1</shortName>
        <ecNumber>3.1.1.11</ecNumber>
    </recommendedName>
    <alternativeName>
        <fullName>Pectin methylesterase</fullName>
    </alternativeName>
</protein>
<organism>
    <name type="scientific">Citrus sinensis</name>
    <name type="common">Sweet orange</name>
    <name type="synonym">Citrus aurantium var. sinensis</name>
    <dbReference type="NCBI Taxonomy" id="2711"/>
    <lineage>
        <taxon>Eukaryota</taxon>
        <taxon>Viridiplantae</taxon>
        <taxon>Streptophyta</taxon>
        <taxon>Embryophyta</taxon>
        <taxon>Tracheophyta</taxon>
        <taxon>Spermatophyta</taxon>
        <taxon>Magnoliopsida</taxon>
        <taxon>eudicotyledons</taxon>
        <taxon>Gunneridae</taxon>
        <taxon>Pentapetalae</taxon>
        <taxon>rosids</taxon>
        <taxon>malvids</taxon>
        <taxon>Sapindales</taxon>
        <taxon>Rutaceae</taxon>
        <taxon>Aurantioideae</taxon>
        <taxon>Citrus</taxon>
    </lineage>
</organism>
<sequence length="584" mass="63513">MTHIKEFFTKLSESSSNQNISNIPKKKKKLFLALFATLLVVAAVIGIVAGVNSRKNSGDNGNEPHHAILKSSCSSTRYPDLCFSAIAAVPEASKKVTSQKDVIEMSLNITTTAVEHNYFGIQKLLKRTNLTKREKVALHDCLETIDETLDELHKAVEDLEEYPNKKSLSQHADDLKTLMSAAMTNQGTCLDGFSHDDANKHVRDALSDGQVHVEKMCSNALAMIKNMTDTDMMIMRTSNNRKLTEETSTVDGWPAWLSPGDRRLLQSSSVTPNAVVAADGSGNFKTVAAAVAAAPQGGTKRYIIRIKAGVYRENVEVTKKHKNIMFIGDGRTRTIITGSRNVVDGSTTFKSATAAVVGEGFLARDITFQNTAGPSKHQAVALRVGADLSAFYNCDMLAYQDTLYVHSNRQFFVNCLIAGTVDFIFGNAAAVLQNCDIHARKPNSGQKNMVTAQGRTDPNQNTGIVIQKSRIGATSDLKPVQGSFPTYLGRPWKEYSRTVIMQSSITDLIHPAGWHEWDGNFALNTLFYGEHQNSGAGAGTSGRVKWKGFRVITSATEAQAFTPGSFIAGSSWLGSTGFPFSLGL</sequence>
<comment type="function">
    <text evidence="1">Acts in the modification of cell walls via demethylesterification of cell wall pectin.</text>
</comment>
<comment type="catalytic activity">
    <reaction>
        <text>[(1-&gt;4)-alpha-D-galacturonosyl methyl ester](n) + n H2O = [(1-&gt;4)-alpha-D-galacturonosyl](n) + n methanol + n H(+)</text>
        <dbReference type="Rhea" id="RHEA:22380"/>
        <dbReference type="Rhea" id="RHEA-COMP:14570"/>
        <dbReference type="Rhea" id="RHEA-COMP:14573"/>
        <dbReference type="ChEBI" id="CHEBI:15377"/>
        <dbReference type="ChEBI" id="CHEBI:15378"/>
        <dbReference type="ChEBI" id="CHEBI:17790"/>
        <dbReference type="ChEBI" id="CHEBI:140522"/>
        <dbReference type="ChEBI" id="CHEBI:140523"/>
        <dbReference type="EC" id="3.1.1.11"/>
    </reaction>
</comment>
<comment type="pathway">
    <text>Glycan metabolism; pectin degradation; 2-dehydro-3-deoxy-D-gluconate from pectin: step 1/5.</text>
</comment>
<comment type="subcellular location">
    <subcellularLocation>
        <location evidence="5">Secreted</location>
        <location evidence="5">Cell wall</location>
    </subcellularLocation>
</comment>
<comment type="tissue specificity">
    <text evidence="4">Expressed at high levels in flower buds, shoots and young leaves, and at lower levels in young fruit, young bark and juice vesicles. Not expressed at significant levels in leaf abscission zones following ethylene treatment or in mature leaves. In fruit abscission zones, expression was initially undetectable but increased markedly following ethylene treatment.</text>
</comment>
<comment type="induction">
    <text evidence="4">By ethylene.</text>
</comment>
<comment type="miscellaneous">
    <text>The PMEI region may act as an autoinhibitory domain and prevent untimely PME activity during transport.</text>
</comment>
<comment type="similarity">
    <text evidence="5">In the N-terminal section; belongs to the PMEI family.</text>
</comment>
<comment type="similarity">
    <text evidence="5">In the C-terminal section; belongs to the pectinesterase family.</text>
</comment>
<evidence type="ECO:0000250" key="1"/>
<evidence type="ECO:0000255" key="2"/>
<evidence type="ECO:0000255" key="3">
    <source>
        <dbReference type="PROSITE-ProRule" id="PRU10040"/>
    </source>
</evidence>
<evidence type="ECO:0000269" key="4">
    <source ref="1"/>
</evidence>
<evidence type="ECO:0000305" key="5"/>
<gene>
    <name type="primary">PECS-1.1</name>
</gene>
<reference key="1">
    <citation type="journal article" date="1998" name="Physiol. Plantarum">
        <title>Genetics and expression of two pectinesterase genes in Valencia orange.</title>
        <authorList>
            <person name="Nairn C.J."/>
            <person name="Lewandowski D.J."/>
            <person name="Burns J.K."/>
        </authorList>
    </citation>
    <scope>NUCLEOTIDE SEQUENCE [GENOMIC DNA / MRNA]</scope>
    <scope>TISSUE SPECIFICITY</scope>
    <scope>INDUCTION</scope>
    <source>
        <strain>cv. Valencia</strain>
    </source>
</reference>
<feature type="signal peptide" evidence="2">
    <location>
        <begin position="1"/>
        <end position="42"/>
    </location>
</feature>
<feature type="chain" id="PRO_0000023480" description="Pectinesterase 1">
    <location>
        <begin position="43"/>
        <end position="584"/>
    </location>
</feature>
<feature type="active site" description="Proton donor" evidence="3">
    <location>
        <position position="401"/>
    </location>
</feature>
<feature type="active site" description="Nucleophile" evidence="3">
    <location>
        <position position="422"/>
    </location>
</feature>
<feature type="binding site" evidence="1">
    <location>
        <position position="348"/>
    </location>
    <ligand>
        <name>substrate</name>
    </ligand>
</feature>
<feature type="binding site" evidence="1">
    <location>
        <position position="378"/>
    </location>
    <ligand>
        <name>substrate</name>
    </ligand>
</feature>
<feature type="binding site" evidence="1">
    <location>
        <position position="490"/>
    </location>
    <ligand>
        <name>substrate</name>
    </ligand>
</feature>
<feature type="binding site" evidence="1">
    <location>
        <position position="492"/>
    </location>
    <ligand>
        <name>substrate</name>
    </ligand>
</feature>
<feature type="site" description="Transition state stabilizer" evidence="1">
    <location>
        <position position="400"/>
    </location>
</feature>
<feature type="glycosylation site" description="N-linked (GlcNAc...) asparagine" evidence="2">
    <location>
        <position position="108"/>
    </location>
</feature>
<feature type="glycosylation site" description="N-linked (GlcNAc...) asparagine" evidence="2">
    <location>
        <position position="129"/>
    </location>
</feature>
<feature type="glycosylation site" description="N-linked (GlcNAc...) asparagine" evidence="2">
    <location>
        <position position="226"/>
    </location>
</feature>
<feature type="disulfide bond" evidence="1">
    <location>
        <begin position="415"/>
        <end position="435"/>
    </location>
</feature>
<feature type="sequence conflict" description="In Ref. 1; AAB57670." evidence="5" ref="1">
    <original>A</original>
    <variation>V</variation>
    <location>
        <position position="354"/>
    </location>
</feature>